<sequence>MINDLVSDALTRIRNAGMRRLDVTTLVHSKSVEALANILVEKGYIESCNVVEDGVKKTINVVLKYSDNGKSVINEMKRISKPGRRVYKGKDEIKRFKNGYGTIIVSTSHGVLPNDKAYALGVGGEVMCTVW</sequence>
<accession>Q30TV0</accession>
<gene>
    <name evidence="1" type="primary">rpsH</name>
    <name type="ordered locus">Suden_0300</name>
</gene>
<comment type="function">
    <text evidence="1">One of the primary rRNA binding proteins, it binds directly to 16S rRNA central domain where it helps coordinate assembly of the platform of the 30S subunit.</text>
</comment>
<comment type="subunit">
    <text evidence="1">Part of the 30S ribosomal subunit. Contacts proteins S5 and S12.</text>
</comment>
<comment type="similarity">
    <text evidence="1">Belongs to the universal ribosomal protein uS8 family.</text>
</comment>
<dbReference type="EMBL" id="CP000153">
    <property type="protein sequence ID" value="ABB43581.1"/>
    <property type="molecule type" value="Genomic_DNA"/>
</dbReference>
<dbReference type="RefSeq" id="WP_011371936.1">
    <property type="nucleotide sequence ID" value="NC_007575.1"/>
</dbReference>
<dbReference type="SMR" id="Q30TV0"/>
<dbReference type="STRING" id="326298.Suden_0300"/>
<dbReference type="KEGG" id="tdn:Suden_0300"/>
<dbReference type="eggNOG" id="COG0096">
    <property type="taxonomic scope" value="Bacteria"/>
</dbReference>
<dbReference type="HOGENOM" id="CLU_098428_0_2_7"/>
<dbReference type="OrthoDB" id="9802617at2"/>
<dbReference type="Proteomes" id="UP000002714">
    <property type="component" value="Chromosome"/>
</dbReference>
<dbReference type="GO" id="GO:1990904">
    <property type="term" value="C:ribonucleoprotein complex"/>
    <property type="evidence" value="ECO:0007669"/>
    <property type="project" value="UniProtKB-KW"/>
</dbReference>
<dbReference type="GO" id="GO:0005840">
    <property type="term" value="C:ribosome"/>
    <property type="evidence" value="ECO:0007669"/>
    <property type="project" value="UniProtKB-KW"/>
</dbReference>
<dbReference type="GO" id="GO:0019843">
    <property type="term" value="F:rRNA binding"/>
    <property type="evidence" value="ECO:0007669"/>
    <property type="project" value="UniProtKB-UniRule"/>
</dbReference>
<dbReference type="GO" id="GO:0003735">
    <property type="term" value="F:structural constituent of ribosome"/>
    <property type="evidence" value="ECO:0007669"/>
    <property type="project" value="InterPro"/>
</dbReference>
<dbReference type="GO" id="GO:0006412">
    <property type="term" value="P:translation"/>
    <property type="evidence" value="ECO:0007669"/>
    <property type="project" value="UniProtKB-UniRule"/>
</dbReference>
<dbReference type="FunFam" id="3.30.1490.10:FF:000001">
    <property type="entry name" value="30S ribosomal protein S8"/>
    <property type="match status" value="1"/>
</dbReference>
<dbReference type="Gene3D" id="3.30.1370.30">
    <property type="match status" value="1"/>
</dbReference>
<dbReference type="Gene3D" id="3.30.1490.10">
    <property type="match status" value="1"/>
</dbReference>
<dbReference type="HAMAP" id="MF_01302_B">
    <property type="entry name" value="Ribosomal_uS8_B"/>
    <property type="match status" value="1"/>
</dbReference>
<dbReference type="InterPro" id="IPR000630">
    <property type="entry name" value="Ribosomal_uS8"/>
</dbReference>
<dbReference type="InterPro" id="IPR047863">
    <property type="entry name" value="Ribosomal_uS8_CS"/>
</dbReference>
<dbReference type="InterPro" id="IPR035987">
    <property type="entry name" value="Ribosomal_uS8_sf"/>
</dbReference>
<dbReference type="NCBIfam" id="NF001109">
    <property type="entry name" value="PRK00136.1"/>
    <property type="match status" value="1"/>
</dbReference>
<dbReference type="PANTHER" id="PTHR11758">
    <property type="entry name" value="40S RIBOSOMAL PROTEIN S15A"/>
    <property type="match status" value="1"/>
</dbReference>
<dbReference type="Pfam" id="PF00410">
    <property type="entry name" value="Ribosomal_S8"/>
    <property type="match status" value="1"/>
</dbReference>
<dbReference type="SUPFAM" id="SSF56047">
    <property type="entry name" value="Ribosomal protein S8"/>
    <property type="match status" value="1"/>
</dbReference>
<dbReference type="PROSITE" id="PS00053">
    <property type="entry name" value="RIBOSOMAL_S8"/>
    <property type="match status" value="1"/>
</dbReference>
<name>RS8_SULDN</name>
<organism>
    <name type="scientific">Sulfurimonas denitrificans (strain ATCC 33889 / DSM 1251)</name>
    <name type="common">Thiomicrospira denitrificans (strain ATCC 33889 / DSM 1251)</name>
    <dbReference type="NCBI Taxonomy" id="326298"/>
    <lineage>
        <taxon>Bacteria</taxon>
        <taxon>Pseudomonadati</taxon>
        <taxon>Campylobacterota</taxon>
        <taxon>Epsilonproteobacteria</taxon>
        <taxon>Campylobacterales</taxon>
        <taxon>Sulfurimonadaceae</taxon>
        <taxon>Sulfurimonas</taxon>
    </lineage>
</organism>
<evidence type="ECO:0000255" key="1">
    <source>
        <dbReference type="HAMAP-Rule" id="MF_01302"/>
    </source>
</evidence>
<evidence type="ECO:0000305" key="2"/>
<reference key="1">
    <citation type="journal article" date="2008" name="Appl. Environ. Microbiol.">
        <title>Genome of the epsilonproteobacterial chemolithoautotroph Sulfurimonas denitrificans.</title>
        <authorList>
            <person name="Sievert S.M."/>
            <person name="Scott K.M."/>
            <person name="Klotz M.G."/>
            <person name="Chain P.S.G."/>
            <person name="Hauser L.J."/>
            <person name="Hemp J."/>
            <person name="Huegler M."/>
            <person name="Land M."/>
            <person name="Lapidus A."/>
            <person name="Larimer F.W."/>
            <person name="Lucas S."/>
            <person name="Malfatti S.A."/>
            <person name="Meyer F."/>
            <person name="Paulsen I.T."/>
            <person name="Ren Q."/>
            <person name="Simon J."/>
            <person name="Bailey K."/>
            <person name="Diaz E."/>
            <person name="Fitzpatrick K.A."/>
            <person name="Glover B."/>
            <person name="Gwatney N."/>
            <person name="Korajkic A."/>
            <person name="Long A."/>
            <person name="Mobberley J.M."/>
            <person name="Pantry S.N."/>
            <person name="Pazder G."/>
            <person name="Peterson S."/>
            <person name="Quintanilla J.D."/>
            <person name="Sprinkle R."/>
            <person name="Stephens J."/>
            <person name="Thomas P."/>
            <person name="Vaughn R."/>
            <person name="Weber M.J."/>
            <person name="Wooten L.L."/>
        </authorList>
    </citation>
    <scope>NUCLEOTIDE SEQUENCE [LARGE SCALE GENOMIC DNA]</scope>
    <source>
        <strain>ATCC 33889 / DSM 1251</strain>
    </source>
</reference>
<feature type="chain" id="PRO_0000228870" description="Small ribosomal subunit protein uS8">
    <location>
        <begin position="1"/>
        <end position="131"/>
    </location>
</feature>
<protein>
    <recommendedName>
        <fullName evidence="1">Small ribosomal subunit protein uS8</fullName>
    </recommendedName>
    <alternativeName>
        <fullName evidence="2">30S ribosomal protein S8</fullName>
    </alternativeName>
</protein>
<keyword id="KW-1185">Reference proteome</keyword>
<keyword id="KW-0687">Ribonucleoprotein</keyword>
<keyword id="KW-0689">Ribosomal protein</keyword>
<keyword id="KW-0694">RNA-binding</keyword>
<keyword id="KW-0699">rRNA-binding</keyword>
<proteinExistence type="inferred from homology"/>